<evidence type="ECO:0000250" key="1"/>
<evidence type="ECO:0000305" key="2"/>
<organism>
    <name type="scientific">Mycobacterium leprae (strain TN)</name>
    <dbReference type="NCBI Taxonomy" id="272631"/>
    <lineage>
        <taxon>Bacteria</taxon>
        <taxon>Bacillati</taxon>
        <taxon>Actinomycetota</taxon>
        <taxon>Actinomycetes</taxon>
        <taxon>Mycobacteriales</taxon>
        <taxon>Mycobacteriaceae</taxon>
        <taxon>Mycobacterium</taxon>
    </lineage>
</organism>
<feature type="chain" id="PRO_0000166600" description="Phosphoenolpyruvate carboxylase">
    <location>
        <begin position="1"/>
        <end position="934"/>
    </location>
</feature>
<feature type="active site" evidence="1">
    <location>
        <position position="161"/>
    </location>
</feature>
<feature type="active site" evidence="1">
    <location>
        <position position="593"/>
    </location>
</feature>
<reference key="1">
    <citation type="submission" date="1994-03" db="EMBL/GenBank/DDBJ databases">
        <authorList>
            <person name="Smith D.R."/>
            <person name="Robison K."/>
        </authorList>
    </citation>
    <scope>NUCLEOTIDE SEQUENCE [GENOMIC DNA]</scope>
</reference>
<reference key="2">
    <citation type="journal article" date="2001" name="Nature">
        <title>Massive gene decay in the leprosy bacillus.</title>
        <authorList>
            <person name="Cole S.T."/>
            <person name="Eiglmeier K."/>
            <person name="Parkhill J."/>
            <person name="James K.D."/>
            <person name="Thomson N.R."/>
            <person name="Wheeler P.R."/>
            <person name="Honore N."/>
            <person name="Garnier T."/>
            <person name="Churcher C.M."/>
            <person name="Harris D.E."/>
            <person name="Mungall K.L."/>
            <person name="Basham D."/>
            <person name="Brown D."/>
            <person name="Chillingworth T."/>
            <person name="Connor R."/>
            <person name="Davies R.M."/>
            <person name="Devlin K."/>
            <person name="Duthoy S."/>
            <person name="Feltwell T."/>
            <person name="Fraser A."/>
            <person name="Hamlin N."/>
            <person name="Holroyd S."/>
            <person name="Hornsby T."/>
            <person name="Jagels K."/>
            <person name="Lacroix C."/>
            <person name="Maclean J."/>
            <person name="Moule S."/>
            <person name="Murphy L.D."/>
            <person name="Oliver K."/>
            <person name="Quail M.A."/>
            <person name="Rajandream M.A."/>
            <person name="Rutherford K.M."/>
            <person name="Rutter S."/>
            <person name="Seeger K."/>
            <person name="Simon S."/>
            <person name="Simmonds M."/>
            <person name="Skelton J."/>
            <person name="Squares R."/>
            <person name="Squares S."/>
            <person name="Stevens K."/>
            <person name="Taylor K."/>
            <person name="Whitehead S."/>
            <person name="Woodward J.R."/>
            <person name="Barrell B.G."/>
        </authorList>
    </citation>
    <scope>NUCLEOTIDE SEQUENCE [LARGE SCALE GENOMIC DNA]</scope>
    <source>
        <strain>TN</strain>
    </source>
</reference>
<sequence>MVEFSDAILEPIGAVQRTRVGREATEPMRADIRLLGTILGDTLREQNGDEVFDLVERVRVESFRVRRSEIDRADMARMFSGLDIHLAIPIIRAFSHFALLANVAEDIHRERRRHIHLDAGEPLRDSSLAATYAKLDLAKLDSATVADALTGAVVSPVITAHPTETRRRTVFVTQRRITELMRLHAEGHTETADGRSIERELRRQILTLWQTALIRLARLQISDEIDVGLRYYSAALFHVIPQVNSEVRNALRARWPDAELLSGPILQPGSWIGGDRDGNPNVTADVVRRATGSAAYTVVAHYLAELTHLEQELSMSARLITVTPELATLAASCQDAACADEPYRRALRVIRGRLSSTAAHILDQQPPNQLGLGLPPYSTPAELCADLDTIEASLCTHGAALLADDRLALLREGVGVFGFHLCGLDMRQNSDVHEEVVAELLAWAGMHQDYSSLPEDQRVKLLVAELGNRRPLVGDRAQLSDLARGELAVLAAAAHAVELYGSAAVPNYIISMCQSVSDVLEVAILLKETGLLDASGSQPYCPVGISPLFETIDDLHNGAAILHAMLELPLYRTLVAARGNWQEVMLGYSDSNKDGGYLAANWAVYRAELALVDVARKTGIRLRLFHGRGGTVGRGGGPSYQAILAQPPGAVNGSLRLTEQGEVIAAKYAEPQIARRNLESLVAATLESTLLDVEGLGDAAESAYAILDEVAGLARRSYAELVNTPGFVDYFQASTPVSEIGSLNIGNRPTSRKPTTSIADLRAIPWVLAWSQSRVMLPGWYGTGSAFQQWVAAGPESESQRVEMLHDLYQRWPFFRSVLSNMAQVLAKSDLGLAARYAELVVDEALRRRVFDKIADEHRRTIAIHKLITGHDDLLADNPALARSVFNRFPYLEPLNHLQVELLRRYRSGHDDEMVQRGILLTMNGLASALRNSG</sequence>
<protein>
    <recommendedName>
        <fullName>Phosphoenolpyruvate carboxylase</fullName>
        <shortName>PEPC</shortName>
        <shortName>PEPCase</shortName>
        <ecNumber>4.1.1.31</ecNumber>
    </recommendedName>
</protein>
<accession>P46710</accession>
<accession>Q9CCN5</accession>
<gene>
    <name type="primary">ppc</name>
    <name type="ordered locus">ML0578</name>
    <name type="ORF">B1496_C3_207</name>
</gene>
<proteinExistence type="inferred from homology"/>
<comment type="function">
    <text evidence="1">Forms oxaloacetate, a four-carbon dicarboxylic acid source for the tricarboxylic acid cycle.</text>
</comment>
<comment type="catalytic activity">
    <reaction>
        <text>oxaloacetate + phosphate = phosphoenolpyruvate + hydrogencarbonate</text>
        <dbReference type="Rhea" id="RHEA:28370"/>
        <dbReference type="ChEBI" id="CHEBI:16452"/>
        <dbReference type="ChEBI" id="CHEBI:17544"/>
        <dbReference type="ChEBI" id="CHEBI:43474"/>
        <dbReference type="ChEBI" id="CHEBI:58702"/>
        <dbReference type="EC" id="4.1.1.31"/>
    </reaction>
</comment>
<comment type="cofactor">
    <cofactor evidence="1">
        <name>Mg(2+)</name>
        <dbReference type="ChEBI" id="CHEBI:18420"/>
    </cofactor>
</comment>
<comment type="similarity">
    <text evidence="2">Belongs to the PEPCase type 1 family.</text>
</comment>
<comment type="sequence caution" evidence="2">
    <conflict type="erroneous initiation">
        <sequence resource="EMBL-CDS" id="AAA17132"/>
    </conflict>
</comment>
<dbReference type="EC" id="4.1.1.31"/>
<dbReference type="EMBL" id="U00013">
    <property type="protein sequence ID" value="AAA17132.1"/>
    <property type="status" value="ALT_INIT"/>
    <property type="molecule type" value="Genomic_DNA"/>
</dbReference>
<dbReference type="EMBL" id="AL583919">
    <property type="protein sequence ID" value="CAC30086.1"/>
    <property type="molecule type" value="Genomic_DNA"/>
</dbReference>
<dbReference type="PIR" id="B86981">
    <property type="entry name" value="B86981"/>
</dbReference>
<dbReference type="PIR" id="S72765">
    <property type="entry name" value="S72765"/>
</dbReference>
<dbReference type="RefSeq" id="NP_301490.1">
    <property type="nucleotide sequence ID" value="NC_002677.1"/>
</dbReference>
<dbReference type="RefSeq" id="WP_010907814.1">
    <property type="nucleotide sequence ID" value="NC_002677.1"/>
</dbReference>
<dbReference type="SMR" id="P46710"/>
<dbReference type="STRING" id="272631.gene:17574399"/>
<dbReference type="KEGG" id="mle:ML0578"/>
<dbReference type="PATRIC" id="fig|272631.5.peg.1007"/>
<dbReference type="Leproma" id="ML0578"/>
<dbReference type="eggNOG" id="COG2352">
    <property type="taxonomic scope" value="Bacteria"/>
</dbReference>
<dbReference type="HOGENOM" id="CLU_006557_2_0_11"/>
<dbReference type="OrthoDB" id="9768133at2"/>
<dbReference type="Proteomes" id="UP000000806">
    <property type="component" value="Chromosome"/>
</dbReference>
<dbReference type="GO" id="GO:0005829">
    <property type="term" value="C:cytosol"/>
    <property type="evidence" value="ECO:0007669"/>
    <property type="project" value="TreeGrafter"/>
</dbReference>
<dbReference type="GO" id="GO:0000287">
    <property type="term" value="F:magnesium ion binding"/>
    <property type="evidence" value="ECO:0007669"/>
    <property type="project" value="UniProtKB-UniRule"/>
</dbReference>
<dbReference type="GO" id="GO:0008964">
    <property type="term" value="F:phosphoenolpyruvate carboxylase activity"/>
    <property type="evidence" value="ECO:0007669"/>
    <property type="project" value="UniProtKB-UniRule"/>
</dbReference>
<dbReference type="GO" id="GO:0015977">
    <property type="term" value="P:carbon fixation"/>
    <property type="evidence" value="ECO:0007669"/>
    <property type="project" value="UniProtKB-UniRule"/>
</dbReference>
<dbReference type="GO" id="GO:0006107">
    <property type="term" value="P:oxaloacetate metabolic process"/>
    <property type="evidence" value="ECO:0007669"/>
    <property type="project" value="UniProtKB-UniRule"/>
</dbReference>
<dbReference type="GO" id="GO:0006099">
    <property type="term" value="P:tricarboxylic acid cycle"/>
    <property type="evidence" value="ECO:0007669"/>
    <property type="project" value="InterPro"/>
</dbReference>
<dbReference type="Gene3D" id="1.20.1440.90">
    <property type="entry name" value="Phosphoenolpyruvate/pyruvate domain"/>
    <property type="match status" value="1"/>
</dbReference>
<dbReference type="HAMAP" id="MF_00595">
    <property type="entry name" value="PEPcase_type1"/>
    <property type="match status" value="1"/>
</dbReference>
<dbReference type="InterPro" id="IPR021135">
    <property type="entry name" value="PEP_COase"/>
</dbReference>
<dbReference type="InterPro" id="IPR022805">
    <property type="entry name" value="PEP_COase_bac/pln-type"/>
</dbReference>
<dbReference type="InterPro" id="IPR018129">
    <property type="entry name" value="PEP_COase_Lys_AS"/>
</dbReference>
<dbReference type="InterPro" id="IPR033129">
    <property type="entry name" value="PEPCASE_His_AS"/>
</dbReference>
<dbReference type="InterPro" id="IPR015813">
    <property type="entry name" value="Pyrv/PenolPyrv_kinase-like_dom"/>
</dbReference>
<dbReference type="NCBIfam" id="NF000584">
    <property type="entry name" value="PRK00009.1"/>
    <property type="match status" value="1"/>
</dbReference>
<dbReference type="PANTHER" id="PTHR30523">
    <property type="entry name" value="PHOSPHOENOLPYRUVATE CARBOXYLASE"/>
    <property type="match status" value="1"/>
</dbReference>
<dbReference type="PANTHER" id="PTHR30523:SF6">
    <property type="entry name" value="PHOSPHOENOLPYRUVATE CARBOXYLASE"/>
    <property type="match status" value="1"/>
</dbReference>
<dbReference type="Pfam" id="PF00311">
    <property type="entry name" value="PEPcase"/>
    <property type="match status" value="1"/>
</dbReference>
<dbReference type="PRINTS" id="PR00150">
    <property type="entry name" value="PEPCARBXLASE"/>
</dbReference>
<dbReference type="SUPFAM" id="SSF51621">
    <property type="entry name" value="Phosphoenolpyruvate/pyruvate domain"/>
    <property type="match status" value="1"/>
</dbReference>
<dbReference type="PROSITE" id="PS00781">
    <property type="entry name" value="PEPCASE_1"/>
    <property type="match status" value="1"/>
</dbReference>
<dbReference type="PROSITE" id="PS00393">
    <property type="entry name" value="PEPCASE_2"/>
    <property type="match status" value="1"/>
</dbReference>
<name>CAPP_MYCLE</name>
<keyword id="KW-0120">Carbon dioxide fixation</keyword>
<keyword id="KW-0456">Lyase</keyword>
<keyword id="KW-0460">Magnesium</keyword>
<keyword id="KW-1185">Reference proteome</keyword>